<reference key="1">
    <citation type="journal article" date="2004" name="Nature">
        <title>Genome evolution in yeasts.</title>
        <authorList>
            <person name="Dujon B."/>
            <person name="Sherman D."/>
            <person name="Fischer G."/>
            <person name="Durrens P."/>
            <person name="Casaregola S."/>
            <person name="Lafontaine I."/>
            <person name="de Montigny J."/>
            <person name="Marck C."/>
            <person name="Neuveglise C."/>
            <person name="Talla E."/>
            <person name="Goffard N."/>
            <person name="Frangeul L."/>
            <person name="Aigle M."/>
            <person name="Anthouard V."/>
            <person name="Babour A."/>
            <person name="Barbe V."/>
            <person name="Barnay S."/>
            <person name="Blanchin S."/>
            <person name="Beckerich J.-M."/>
            <person name="Beyne E."/>
            <person name="Bleykasten C."/>
            <person name="Boisrame A."/>
            <person name="Boyer J."/>
            <person name="Cattolico L."/>
            <person name="Confanioleri F."/>
            <person name="de Daruvar A."/>
            <person name="Despons L."/>
            <person name="Fabre E."/>
            <person name="Fairhead C."/>
            <person name="Ferry-Dumazet H."/>
            <person name="Groppi A."/>
            <person name="Hantraye F."/>
            <person name="Hennequin C."/>
            <person name="Jauniaux N."/>
            <person name="Joyet P."/>
            <person name="Kachouri R."/>
            <person name="Kerrest A."/>
            <person name="Koszul R."/>
            <person name="Lemaire M."/>
            <person name="Lesur I."/>
            <person name="Ma L."/>
            <person name="Muller H."/>
            <person name="Nicaud J.-M."/>
            <person name="Nikolski M."/>
            <person name="Oztas S."/>
            <person name="Ozier-Kalogeropoulos O."/>
            <person name="Pellenz S."/>
            <person name="Potier S."/>
            <person name="Richard G.-F."/>
            <person name="Straub M.-L."/>
            <person name="Suleau A."/>
            <person name="Swennen D."/>
            <person name="Tekaia F."/>
            <person name="Wesolowski-Louvel M."/>
            <person name="Westhof E."/>
            <person name="Wirth B."/>
            <person name="Zeniou-Meyer M."/>
            <person name="Zivanovic Y."/>
            <person name="Bolotin-Fukuhara M."/>
            <person name="Thierry A."/>
            <person name="Bouchier C."/>
            <person name="Caudron B."/>
            <person name="Scarpelli C."/>
            <person name="Gaillardin C."/>
            <person name="Weissenbach J."/>
            <person name="Wincker P."/>
            <person name="Souciet J.-L."/>
        </authorList>
    </citation>
    <scope>NUCLEOTIDE SEQUENCE [LARGE SCALE GENOMIC DNA]</scope>
    <source>
        <strain>CLIB 122 / E 150</strain>
    </source>
</reference>
<proteinExistence type="inferred from homology"/>
<accession>Q6CC99</accession>
<feature type="chain" id="PRO_0000227728" description="Histone acetyltransferase type B catalytic subunit">
    <location>
        <begin position="1"/>
        <end position="451"/>
    </location>
</feature>
<feature type="region of interest" description="Interaction with histone H4 N-terminus" evidence="3">
    <location>
        <begin position="52"/>
        <end position="54"/>
    </location>
</feature>
<feature type="region of interest" description="Interaction with histone H4 N-terminus" evidence="3">
    <location>
        <begin position="202"/>
        <end position="204"/>
    </location>
</feature>
<feature type="active site" description="Proton donor/acceptor" evidence="3">
    <location>
        <position position="276"/>
    </location>
</feature>
<feature type="binding site" evidence="3">
    <location>
        <begin position="241"/>
        <end position="243"/>
    </location>
    <ligand>
        <name>acetyl-CoA</name>
        <dbReference type="ChEBI" id="CHEBI:57288"/>
    </ligand>
</feature>
<feature type="binding site" evidence="3">
    <location>
        <begin position="248"/>
        <end position="254"/>
    </location>
    <ligand>
        <name>acetyl-CoA</name>
        <dbReference type="ChEBI" id="CHEBI:57288"/>
    </ligand>
</feature>
<feature type="site" description="Interaction with histone H4 N-terminus" evidence="2">
    <location>
        <position position="183"/>
    </location>
</feature>
<organism>
    <name type="scientific">Yarrowia lipolytica (strain CLIB 122 / E 150)</name>
    <name type="common">Yeast</name>
    <name type="synonym">Candida lipolytica</name>
    <dbReference type="NCBI Taxonomy" id="284591"/>
    <lineage>
        <taxon>Eukaryota</taxon>
        <taxon>Fungi</taxon>
        <taxon>Dikarya</taxon>
        <taxon>Ascomycota</taxon>
        <taxon>Saccharomycotina</taxon>
        <taxon>Dipodascomycetes</taxon>
        <taxon>Dipodascales</taxon>
        <taxon>Dipodascales incertae sedis</taxon>
        <taxon>Yarrowia</taxon>
    </lineage>
</organism>
<protein>
    <recommendedName>
        <fullName>Histone acetyltransferase type B catalytic subunit</fullName>
        <ecNumber evidence="3">2.3.1.48</ecNumber>
    </recommendedName>
</protein>
<comment type="function">
    <text evidence="3">Catalytic component of the histone acetylase B (HAT-B) complex. Acetylates 'Lys-12' of histone H4 which is required for telomeric silencing. Has intrinsic substrate specificity that modifies lysine in recognition sequence GXGKXG. Involved in DNA double-strand break repair.</text>
</comment>
<comment type="catalytic activity">
    <reaction evidence="3">
        <text>L-lysyl-[protein] + acetyl-CoA = N(6)-acetyl-L-lysyl-[protein] + CoA + H(+)</text>
        <dbReference type="Rhea" id="RHEA:45948"/>
        <dbReference type="Rhea" id="RHEA-COMP:9752"/>
        <dbReference type="Rhea" id="RHEA-COMP:10731"/>
        <dbReference type="ChEBI" id="CHEBI:15378"/>
        <dbReference type="ChEBI" id="CHEBI:29969"/>
        <dbReference type="ChEBI" id="CHEBI:57287"/>
        <dbReference type="ChEBI" id="CHEBI:57288"/>
        <dbReference type="ChEBI" id="CHEBI:61930"/>
        <dbReference type="EC" id="2.3.1.48"/>
    </reaction>
</comment>
<comment type="subunit">
    <text evidence="3">Component of the HAT-B complex composed of at least HAT1 and HAT2. The HAT-B complex binds to histone H4 tail (By similarity).</text>
</comment>
<comment type="subcellular location">
    <subcellularLocation>
        <location evidence="1">Cytoplasm</location>
    </subcellularLocation>
    <subcellularLocation>
        <location evidence="1">Nucleus</location>
    </subcellularLocation>
</comment>
<comment type="similarity">
    <text evidence="4">Belongs to the HAT1 family.</text>
</comment>
<keyword id="KW-0012">Acyltransferase</keyword>
<keyword id="KW-0156">Chromatin regulator</keyword>
<keyword id="KW-0963">Cytoplasm</keyword>
<keyword id="KW-0227">DNA damage</keyword>
<keyword id="KW-0234">DNA repair</keyword>
<keyword id="KW-0539">Nucleus</keyword>
<keyword id="KW-1185">Reference proteome</keyword>
<keyword id="KW-0808">Transferase</keyword>
<dbReference type="EC" id="2.3.1.48" evidence="3"/>
<dbReference type="EMBL" id="CR382129">
    <property type="protein sequence ID" value="CAG82023.1"/>
    <property type="molecule type" value="Genomic_DNA"/>
</dbReference>
<dbReference type="RefSeq" id="XP_501713.1">
    <property type="nucleotide sequence ID" value="XM_501713.1"/>
</dbReference>
<dbReference type="SMR" id="Q6CC99"/>
<dbReference type="FunCoup" id="Q6CC99">
    <property type="interactions" value="1193"/>
</dbReference>
<dbReference type="STRING" id="284591.Q6CC99"/>
<dbReference type="EnsemblFungi" id="CAG82023">
    <property type="protein sequence ID" value="CAG82023"/>
    <property type="gene ID" value="YALI0_C11231g"/>
</dbReference>
<dbReference type="KEGG" id="yli:2909147"/>
<dbReference type="VEuPathDB" id="FungiDB:YALI0_C11231g"/>
<dbReference type="HOGENOM" id="CLU_036024_2_1_1"/>
<dbReference type="InParanoid" id="Q6CC99"/>
<dbReference type="OMA" id="WTCDAND"/>
<dbReference type="OrthoDB" id="118039at4891"/>
<dbReference type="Proteomes" id="UP000001300">
    <property type="component" value="Chromosome C"/>
</dbReference>
<dbReference type="GO" id="GO:0000781">
    <property type="term" value="C:chromosome, telomeric region"/>
    <property type="evidence" value="ECO:0007669"/>
    <property type="project" value="GOC"/>
</dbReference>
<dbReference type="GO" id="GO:0005737">
    <property type="term" value="C:cytoplasm"/>
    <property type="evidence" value="ECO:0007669"/>
    <property type="project" value="UniProtKB-SubCell"/>
</dbReference>
<dbReference type="GO" id="GO:0005634">
    <property type="term" value="C:nucleus"/>
    <property type="evidence" value="ECO:0007669"/>
    <property type="project" value="UniProtKB-SubCell"/>
</dbReference>
<dbReference type="GO" id="GO:0042393">
    <property type="term" value="F:histone binding"/>
    <property type="evidence" value="ECO:0007669"/>
    <property type="project" value="InterPro"/>
</dbReference>
<dbReference type="GO" id="GO:0010485">
    <property type="term" value="F:histone H4 acetyltransferase activity"/>
    <property type="evidence" value="ECO:0000318"/>
    <property type="project" value="GO_Central"/>
</dbReference>
<dbReference type="GO" id="GO:0006281">
    <property type="term" value="P:DNA repair"/>
    <property type="evidence" value="ECO:0007669"/>
    <property type="project" value="UniProtKB-KW"/>
</dbReference>
<dbReference type="GO" id="GO:0031509">
    <property type="term" value="P:subtelomeric heterochromatin formation"/>
    <property type="evidence" value="ECO:0007669"/>
    <property type="project" value="InterPro"/>
</dbReference>
<dbReference type="FunFam" id="3.40.630.30:FF:000114">
    <property type="entry name" value="Histone acetyltransferase type B catalytic subunit"/>
    <property type="match status" value="1"/>
</dbReference>
<dbReference type="Gene3D" id="1.10.10.390">
    <property type="match status" value="1"/>
</dbReference>
<dbReference type="Gene3D" id="3.40.630.30">
    <property type="match status" value="1"/>
</dbReference>
<dbReference type="Gene3D" id="3.90.360.10">
    <property type="entry name" value="Histone acetyl transferase 1 (HAT1), N-terminal domain"/>
    <property type="match status" value="1"/>
</dbReference>
<dbReference type="InterPro" id="IPR016181">
    <property type="entry name" value="Acyl_CoA_acyltransferase"/>
</dbReference>
<dbReference type="InterPro" id="IPR019467">
    <property type="entry name" value="Hat1_N"/>
</dbReference>
<dbReference type="InterPro" id="IPR037113">
    <property type="entry name" value="Hat1_N_sf"/>
</dbReference>
<dbReference type="InterPro" id="IPR017380">
    <property type="entry name" value="Hist_AcTrfase_B-typ_cat-su"/>
</dbReference>
<dbReference type="InterPro" id="IPR013523">
    <property type="entry name" value="Hist_AcTrfase_HAT1_C"/>
</dbReference>
<dbReference type="PANTHER" id="PTHR12046">
    <property type="entry name" value="HISTONE ACETYLTRANSFERASE TYPE B CATALYTIC SUBUNIT"/>
    <property type="match status" value="1"/>
</dbReference>
<dbReference type="Pfam" id="PF21184">
    <property type="entry name" value="HAT1_C_fung"/>
    <property type="match status" value="1"/>
</dbReference>
<dbReference type="Pfam" id="PF10394">
    <property type="entry name" value="Hat1_N"/>
    <property type="match status" value="1"/>
</dbReference>
<dbReference type="PIRSF" id="PIRSF038084">
    <property type="entry name" value="HAT-B_cat"/>
    <property type="match status" value="1"/>
</dbReference>
<dbReference type="SUPFAM" id="SSF55729">
    <property type="entry name" value="Acyl-CoA N-acyltransferases (Nat)"/>
    <property type="match status" value="1"/>
</dbReference>
<sequence length="451" mass="52089">MDIATEWTTNANEALTITLEPSKGKGKGKEVSNGSEKSHVFNPIFTYPIYGDVETILGYKNFELNLKMDASTMLPLVTVKFSDKLEFDGISFDDPVERLLEFLPEETATDEAEWEEKRVKELGDGFKPVGKEFGTFSVNSEKYTVHRSTLLDPETLKLHLRLQIFVPLFIEAGSYIDNEDDRWEIYIVYNAEKEIVGFSTVYCYWFYEPSAKESKAPKDASLEQLQKQPFSPTLRKRISQYVILPPFQGKGLGGQLYTLLFSRFYADPNVYEITVEDPSEAFDDLRDRCDLKWLADQGFPSEVFRMLQTTSAHGEKAGDNRTGRTKVVAGAFWTKWLEEHRLKYKLAHRQFARCFEMILLACLEVSSPTKKRNIKDARLFIKKRVYVRNREFLEELGGKIEVMSKLQETYESMEEDYARIMKPVLGYVKDGLKKRDRNDAGNEEAKRVKVE</sequence>
<name>HAT1_YARLI</name>
<evidence type="ECO:0000250" key="1"/>
<evidence type="ECO:0000250" key="2">
    <source>
        <dbReference type="UniProtKB" id="O14929"/>
    </source>
</evidence>
<evidence type="ECO:0000250" key="3">
    <source>
        <dbReference type="UniProtKB" id="Q12341"/>
    </source>
</evidence>
<evidence type="ECO:0000305" key="4"/>
<gene>
    <name type="primary">HAT1</name>
    <name type="ordered locus">YALI0C11231g</name>
</gene>